<accession>O75830</accession>
<reference key="1">
    <citation type="journal article" date="1998" name="Genes Chromosomes Cancer">
        <title>Isolation and characterization of a novel human pancreas-specific gene, pancpin, that is down-regulated in pancreatic cancer cells.</title>
        <authorList>
            <person name="Ozaki K."/>
            <person name="Nagata M."/>
            <person name="Suzuki M."/>
            <person name="Fujiwara T."/>
            <person name="Miyoshi Y."/>
            <person name="Ishikawa O."/>
            <person name="Ohigashi H."/>
            <person name="Imaoka S."/>
            <person name="Takahashi E."/>
            <person name="Nakamura Y."/>
        </authorList>
    </citation>
    <scope>NUCLEOTIDE SEQUENCE [MRNA]</scope>
    <scope>TISSUE SPECIFICITY</scope>
</reference>
<reference key="2">
    <citation type="journal article" date="1999" name="Proc. Natl. Acad. Sci. U.S.A.">
        <title>Suppression of breast cancer growth and metastasis by a serpin myoepithelium-derived serine proteinase inhibitor expressed in the mammary myoepithelial cells.</title>
        <authorList>
            <person name="Xiao G."/>
            <person name="Liu Y.E."/>
            <person name="Gentz R."/>
            <person name="Sang Q.A."/>
            <person name="Ni J."/>
            <person name="Goldberg I.D."/>
            <person name="Shi Y.E."/>
        </authorList>
    </citation>
    <scope>NUCLEOTIDE SEQUENCE [MRNA]</scope>
</reference>
<reference key="3">
    <citation type="journal article" date="2004" name="Genome Res.">
        <title>The status, quality, and expansion of the NIH full-length cDNA project: the Mammalian Gene Collection (MGC).</title>
        <authorList>
            <consortium name="The MGC Project Team"/>
        </authorList>
    </citation>
    <scope>NUCLEOTIDE SEQUENCE [LARGE SCALE MRNA]</scope>
    <source>
        <tissue>Pancreas</tissue>
        <tissue>Spleen</tissue>
    </source>
</reference>
<feature type="signal peptide" evidence="2">
    <location>
        <begin position="1"/>
        <end position="18"/>
    </location>
</feature>
<feature type="chain" id="PRO_0000032525" description="Serpin I2">
    <location>
        <begin position="19"/>
        <end position="405"/>
    </location>
</feature>
<feature type="site" description="Reactive bond" evidence="1">
    <location>
        <begin position="357"/>
        <end position="358"/>
    </location>
</feature>
<feature type="glycosylation site" description="N-linked (GlcNAc...) asparagine" evidence="2">
    <location>
        <position position="202"/>
    </location>
</feature>
<feature type="glycosylation site" description="N-linked (GlcNAc...) asparagine" evidence="2">
    <location>
        <position position="207"/>
    </location>
</feature>
<feature type="glycosylation site" description="N-linked (GlcNAc...) asparagine" evidence="2">
    <location>
        <position position="306"/>
    </location>
</feature>
<feature type="sequence variant" id="VAR_051957" description="In dbSNP:rs17246389.">
    <original>L</original>
    <variation>V</variation>
    <location>
        <position position="6"/>
    </location>
</feature>
<feature type="sequence variant" id="VAR_024357" description="In dbSNP:rs9841174.">
    <original>E</original>
    <variation>G</variation>
    <location>
        <position position="148"/>
    </location>
</feature>
<comment type="interaction">
    <interactant intactId="EBI-750144">
        <id>O75830</id>
    </interactant>
    <interactant intactId="EBI-749311">
        <id>P37235</id>
        <label>HPCAL1</label>
    </interactant>
    <organismsDiffer>false</organismsDiffer>
    <experiments>3</experiments>
</comment>
<comment type="interaction">
    <interactant intactId="EBI-750144">
        <id>O75830</id>
    </interactant>
    <interactant intactId="EBI-347996">
        <id>O43765</id>
        <label>SGTA</label>
    </interactant>
    <organismsDiffer>false</organismsDiffer>
    <experiments>3</experiments>
</comment>
<comment type="interaction">
    <interactant intactId="EBI-750144">
        <id>O75830</id>
    </interactant>
    <interactant intactId="EBI-744081">
        <id>Q96EQ0</id>
        <label>SGTB</label>
    </interactant>
    <organismsDiffer>false</organismsDiffer>
    <experiments>4</experiments>
</comment>
<comment type="interaction">
    <interactant intactId="EBI-750144">
        <id>O75830</id>
    </interactant>
    <interactant intactId="EBI-741480">
        <id>Q9UMX0</id>
        <label>UBQLN1</label>
    </interactant>
    <organismsDiffer>false</organismsDiffer>
    <experiments>10</experiments>
</comment>
<comment type="interaction">
    <interactant intactId="EBI-750144">
        <id>O75830</id>
    </interactant>
    <interactant intactId="EBI-10173939">
        <id>Q9UMX0-2</id>
        <label>UBQLN1</label>
    </interactant>
    <organismsDiffer>false</organismsDiffer>
    <experiments>3</experiments>
</comment>
<comment type="interaction">
    <interactant intactId="EBI-750144">
        <id>O75830</id>
    </interactant>
    <interactant intactId="EBI-947187">
        <id>Q9UHD9</id>
        <label>UBQLN2</label>
    </interactant>
    <organismsDiffer>false</organismsDiffer>
    <experiments>3</experiments>
</comment>
<comment type="subcellular location">
    <subcellularLocation>
        <location evidence="4">Secreted</location>
    </subcellularLocation>
</comment>
<comment type="tissue specificity">
    <text evidence="3">Expressed in pancreas and adipose tissues.</text>
</comment>
<comment type="similarity">
    <text evidence="4">Belongs to the serpin family.</text>
</comment>
<comment type="sequence caution" evidence="4">
    <conflict type="erroneous initiation">
        <sequence resource="EMBL-CDS" id="AAH27859"/>
    </conflict>
</comment>
<proteinExistence type="evidence at protein level"/>
<evidence type="ECO:0000250" key="1"/>
<evidence type="ECO:0000255" key="2"/>
<evidence type="ECO:0000269" key="3">
    <source>
    </source>
</evidence>
<evidence type="ECO:0000305" key="4"/>
<dbReference type="EMBL" id="AB006423">
    <property type="protein sequence ID" value="BAA33766.1"/>
    <property type="molecule type" value="mRNA"/>
</dbReference>
<dbReference type="EMBL" id="AF130470">
    <property type="protein sequence ID" value="AAD34723.1"/>
    <property type="molecule type" value="mRNA"/>
</dbReference>
<dbReference type="EMBL" id="BC027859">
    <property type="protein sequence ID" value="AAH27859.2"/>
    <property type="status" value="ALT_INIT"/>
    <property type="molecule type" value="mRNA"/>
</dbReference>
<dbReference type="CCDS" id="CCDS3200.1"/>
<dbReference type="RefSeq" id="NP_001012303.2">
    <property type="nucleotide sequence ID" value="NM_001012303.3"/>
</dbReference>
<dbReference type="RefSeq" id="NP_001381256.1">
    <property type="nucleotide sequence ID" value="NM_001394327.1"/>
</dbReference>
<dbReference type="RefSeq" id="NP_006208.1">
    <property type="nucleotide sequence ID" value="NM_006217.6"/>
</dbReference>
<dbReference type="SMR" id="O75830"/>
<dbReference type="BioGRID" id="111294">
    <property type="interactions" value="15"/>
</dbReference>
<dbReference type="FunCoup" id="O75830">
    <property type="interactions" value="90"/>
</dbReference>
<dbReference type="IntAct" id="O75830">
    <property type="interactions" value="13"/>
</dbReference>
<dbReference type="MINT" id="O75830"/>
<dbReference type="STRING" id="9606.ENSP00000481699"/>
<dbReference type="MEROPS" id="I04.026"/>
<dbReference type="GlyCosmos" id="O75830">
    <property type="glycosylation" value="3 sites, No reported glycans"/>
</dbReference>
<dbReference type="GlyGen" id="O75830">
    <property type="glycosylation" value="4 sites, 1 O-linked glycan (1 site)"/>
</dbReference>
<dbReference type="iPTMnet" id="O75830"/>
<dbReference type="PhosphoSitePlus" id="O75830"/>
<dbReference type="BioMuta" id="SERPINI2"/>
<dbReference type="jPOST" id="O75830"/>
<dbReference type="MassIVE" id="O75830"/>
<dbReference type="PaxDb" id="9606-ENSP00000481699"/>
<dbReference type="PeptideAtlas" id="O75830"/>
<dbReference type="ProteomicsDB" id="50219"/>
<dbReference type="Antibodypedia" id="33688">
    <property type="antibodies" value="261 antibodies from 33 providers"/>
</dbReference>
<dbReference type="DNASU" id="5276"/>
<dbReference type="Ensembl" id="ENST00000264677.9">
    <property type="protein sequence ID" value="ENSP00000264677.4"/>
    <property type="gene ID" value="ENSG00000114204.16"/>
</dbReference>
<dbReference type="Ensembl" id="ENST00000461846.5">
    <property type="protein sequence ID" value="ENSP00000417692.1"/>
    <property type="gene ID" value="ENSG00000114204.16"/>
</dbReference>
<dbReference type="Ensembl" id="ENST00000471111.5">
    <property type="protein sequence ID" value="ENSP00000419407.1"/>
    <property type="gene ID" value="ENSG00000114204.16"/>
</dbReference>
<dbReference type="GeneID" id="5276"/>
<dbReference type="KEGG" id="hsa:5276"/>
<dbReference type="MANE-Select" id="ENST00000264677.9">
    <property type="protein sequence ID" value="ENSP00000264677.4"/>
    <property type="RefSeq nucleotide sequence ID" value="NM_006217.6"/>
    <property type="RefSeq protein sequence ID" value="NP_006208.1"/>
</dbReference>
<dbReference type="UCSC" id="uc003fer.3">
    <property type="organism name" value="human"/>
</dbReference>
<dbReference type="AGR" id="HGNC:8945"/>
<dbReference type="CTD" id="5276"/>
<dbReference type="DisGeNET" id="5276"/>
<dbReference type="GeneCards" id="SERPINI2"/>
<dbReference type="HGNC" id="HGNC:8945">
    <property type="gene designation" value="SERPINI2"/>
</dbReference>
<dbReference type="HPA" id="ENSG00000114204">
    <property type="expression patterns" value="Tissue enriched (pancreas)"/>
</dbReference>
<dbReference type="MIM" id="605587">
    <property type="type" value="gene"/>
</dbReference>
<dbReference type="neXtProt" id="NX_O75830"/>
<dbReference type="OpenTargets" id="ENSG00000114204"/>
<dbReference type="PharmGKB" id="PA35513"/>
<dbReference type="VEuPathDB" id="HostDB:ENSG00000114204"/>
<dbReference type="eggNOG" id="KOG2392">
    <property type="taxonomic scope" value="Eukaryota"/>
</dbReference>
<dbReference type="GeneTree" id="ENSGT00940000161641"/>
<dbReference type="HOGENOM" id="CLU_023330_0_4_1"/>
<dbReference type="InParanoid" id="O75830"/>
<dbReference type="OMA" id="IPMMHLQ"/>
<dbReference type="OrthoDB" id="671595at2759"/>
<dbReference type="PAN-GO" id="O75830">
    <property type="GO annotations" value="3 GO annotations based on evolutionary models"/>
</dbReference>
<dbReference type="PhylomeDB" id="O75830"/>
<dbReference type="TreeFam" id="TF343094"/>
<dbReference type="PathwayCommons" id="O75830"/>
<dbReference type="SignaLink" id="O75830"/>
<dbReference type="BioGRID-ORCS" id="5276">
    <property type="hits" value="8 hits in 1142 CRISPR screens"/>
</dbReference>
<dbReference type="ChiTaRS" id="SERPINI2">
    <property type="organism name" value="human"/>
</dbReference>
<dbReference type="GeneWiki" id="SERPINI2"/>
<dbReference type="GenomeRNAi" id="5276"/>
<dbReference type="Pharos" id="O75830">
    <property type="development level" value="Tbio"/>
</dbReference>
<dbReference type="PRO" id="PR:O75830"/>
<dbReference type="Proteomes" id="UP000005640">
    <property type="component" value="Chromosome 3"/>
</dbReference>
<dbReference type="RNAct" id="O75830">
    <property type="molecule type" value="protein"/>
</dbReference>
<dbReference type="Bgee" id="ENSG00000114204">
    <property type="expression patterns" value="Expressed in body of pancreas and 110 other cell types or tissues"/>
</dbReference>
<dbReference type="ExpressionAtlas" id="O75830">
    <property type="expression patterns" value="baseline and differential"/>
</dbReference>
<dbReference type="GO" id="GO:0070062">
    <property type="term" value="C:extracellular exosome"/>
    <property type="evidence" value="ECO:0007005"/>
    <property type="project" value="UniProtKB"/>
</dbReference>
<dbReference type="GO" id="GO:0005615">
    <property type="term" value="C:extracellular space"/>
    <property type="evidence" value="ECO:0000318"/>
    <property type="project" value="GO_Central"/>
</dbReference>
<dbReference type="GO" id="GO:0004867">
    <property type="term" value="F:serine-type endopeptidase inhibitor activity"/>
    <property type="evidence" value="ECO:0000318"/>
    <property type="project" value="GO_Central"/>
</dbReference>
<dbReference type="CDD" id="cd19576">
    <property type="entry name" value="serpinI2_pancpin"/>
    <property type="match status" value="1"/>
</dbReference>
<dbReference type="FunFam" id="2.10.310.10:FF:000001">
    <property type="entry name" value="Serpin family A member 1"/>
    <property type="match status" value="1"/>
</dbReference>
<dbReference type="FunFam" id="3.30.497.10:FF:000005">
    <property type="entry name" value="serpin I2 isoform X1"/>
    <property type="match status" value="1"/>
</dbReference>
<dbReference type="Gene3D" id="2.30.39.10">
    <property type="entry name" value="Alpha-1-antitrypsin, domain 1"/>
    <property type="match status" value="1"/>
</dbReference>
<dbReference type="Gene3D" id="3.30.497.10">
    <property type="entry name" value="Antithrombin, subunit I, domain 2"/>
    <property type="match status" value="1"/>
</dbReference>
<dbReference type="InterPro" id="IPR023795">
    <property type="entry name" value="Serpin_CS"/>
</dbReference>
<dbReference type="InterPro" id="IPR023796">
    <property type="entry name" value="Serpin_dom"/>
</dbReference>
<dbReference type="InterPro" id="IPR000215">
    <property type="entry name" value="Serpin_fam"/>
</dbReference>
<dbReference type="InterPro" id="IPR036186">
    <property type="entry name" value="Serpin_sf"/>
</dbReference>
<dbReference type="InterPro" id="IPR042178">
    <property type="entry name" value="Serpin_sf_1"/>
</dbReference>
<dbReference type="InterPro" id="IPR042185">
    <property type="entry name" value="Serpin_sf_2"/>
</dbReference>
<dbReference type="PANTHER" id="PTHR11461">
    <property type="entry name" value="SERINE PROTEASE INHIBITOR, SERPIN"/>
    <property type="match status" value="1"/>
</dbReference>
<dbReference type="PANTHER" id="PTHR11461:SF51">
    <property type="entry name" value="SERPIN I2"/>
    <property type="match status" value="1"/>
</dbReference>
<dbReference type="Pfam" id="PF00079">
    <property type="entry name" value="Serpin"/>
    <property type="match status" value="1"/>
</dbReference>
<dbReference type="SMART" id="SM00093">
    <property type="entry name" value="SERPIN"/>
    <property type="match status" value="1"/>
</dbReference>
<dbReference type="SUPFAM" id="SSF56574">
    <property type="entry name" value="Serpins"/>
    <property type="match status" value="1"/>
</dbReference>
<dbReference type="PROSITE" id="PS00284">
    <property type="entry name" value="SERPIN"/>
    <property type="match status" value="1"/>
</dbReference>
<gene>
    <name type="primary">SERPINI2</name>
    <name type="synonym">MEPI</name>
    <name type="synonym">PI14</name>
</gene>
<protein>
    <recommendedName>
        <fullName>Serpin I2</fullName>
    </recommendedName>
    <alternativeName>
        <fullName>Myoepithelium-derived serine protease inhibitor</fullName>
    </alternativeName>
    <alternativeName>
        <fullName>Pancpin</fullName>
    </alternativeName>
    <alternativeName>
        <fullName>Pancreas-specific protein TSA2004</fullName>
    </alternativeName>
    <alternativeName>
        <fullName>Peptidase inhibitor 14</fullName>
        <shortName>PI-14</shortName>
    </alternativeName>
</protein>
<keyword id="KW-0325">Glycoprotein</keyword>
<keyword id="KW-0646">Protease inhibitor</keyword>
<keyword id="KW-1267">Proteomics identification</keyword>
<keyword id="KW-1185">Reference proteome</keyword>
<keyword id="KW-0964">Secreted</keyword>
<keyword id="KW-0722">Serine protease inhibitor</keyword>
<keyword id="KW-0732">Signal</keyword>
<name>SPI2_HUMAN</name>
<sequence>MDTIFLWSLLLLFFGSQASRCSAQKNTEFAVDLYQEVSLSHKDNIIFSPLGITLVLEMVQLGAKGKAQQQIRQTLKQQETSAGEEFFVLKSFFSAISEKKQEFTFNLANALYLQEGFTVKEQYLHGNKEFFQSAIKLVDFQDAKACAEMISTWVERKTDGKIKDMFSGEEFGPLTRLVLVNAIYFKGDWKQKFRKEDTQLINFTKKNGSTVKIPMMKALLRTKYGYFSESSLNYQVLELSYKGDEFSLIIILPAEGMDIEEVEKLITAQQILKWLSEMQEEEVEISLPRFKVEQKVDFKDVLYSLNITEIFSGGCDLSGITDSSEVYVSQVTQKVFFEINEDGSEAATSTGIHIPVIMSLAQSQFIANHPFLFIMKHNPTESILFMGRVTNPDTQEIKGRDLDSL</sequence>
<organism>
    <name type="scientific">Homo sapiens</name>
    <name type="common">Human</name>
    <dbReference type="NCBI Taxonomy" id="9606"/>
    <lineage>
        <taxon>Eukaryota</taxon>
        <taxon>Metazoa</taxon>
        <taxon>Chordata</taxon>
        <taxon>Craniata</taxon>
        <taxon>Vertebrata</taxon>
        <taxon>Euteleostomi</taxon>
        <taxon>Mammalia</taxon>
        <taxon>Eutheria</taxon>
        <taxon>Euarchontoglires</taxon>
        <taxon>Primates</taxon>
        <taxon>Haplorrhini</taxon>
        <taxon>Catarrhini</taxon>
        <taxon>Hominidae</taxon>
        <taxon>Homo</taxon>
    </lineage>
</organism>